<organism>
    <name type="scientific">Zea mays</name>
    <name type="common">Maize</name>
    <dbReference type="NCBI Taxonomy" id="4577"/>
    <lineage>
        <taxon>Eukaryota</taxon>
        <taxon>Viridiplantae</taxon>
        <taxon>Streptophyta</taxon>
        <taxon>Embryophyta</taxon>
        <taxon>Tracheophyta</taxon>
        <taxon>Spermatophyta</taxon>
        <taxon>Magnoliopsida</taxon>
        <taxon>Liliopsida</taxon>
        <taxon>Poales</taxon>
        <taxon>Poaceae</taxon>
        <taxon>PACMAD clade</taxon>
        <taxon>Panicoideae</taxon>
        <taxon>Andropogonodae</taxon>
        <taxon>Andropogoneae</taxon>
        <taxon>Tripsacinae</taxon>
        <taxon>Zea</taxon>
    </lineage>
</organism>
<comment type="function">
    <text evidence="6">Non-functional sesquiterpene synthase having less than 1% of the activity found in TPS5A.</text>
</comment>
<comment type="cofactor">
    <cofactor evidence="4">
        <name>Mg(2+)</name>
        <dbReference type="ChEBI" id="CHEBI:18420"/>
    </cofactor>
    <cofactor evidence="4">
        <name>Mn(2+)</name>
        <dbReference type="ChEBI" id="CHEBI:29035"/>
    </cofactor>
    <text evidence="3">Binds 3 Mg(2+) or Mn(2+) ions per subunit.</text>
</comment>
<comment type="pathway">
    <text evidence="10">Secondary metabolite biosynthesis; terpenoid biosynthesis.</text>
</comment>
<comment type="subunit">
    <text evidence="4">Monomer.</text>
</comment>
<comment type="subcellular location">
    <subcellularLocation>
        <location evidence="5">Cytoplasm</location>
    </subcellularLocation>
</comment>
<comment type="domain">
    <text evidence="1">The Asp-Asp-Xaa-Xaa-Asp/Glu (DDXXD/E) motif is important for the catalytic activity, presumably through binding to Mg(2+).</text>
</comment>
<comment type="miscellaneous">
    <text evidence="9">The allele found in cv. B73 encodes an inactive enzyme while the two alleles found in cv. Delprim encode an active (TPS5A) and an inactive (TPS5B) enzyme (PubMed:15075399).</text>
</comment>
<comment type="similarity">
    <text evidence="8">Belongs to the terpene synthase family.</text>
</comment>
<evidence type="ECO:0000250" key="1">
    <source>
        <dbReference type="UniProtKB" id="A0A1C9J6A7"/>
    </source>
</evidence>
<evidence type="ECO:0000250" key="2">
    <source>
        <dbReference type="UniProtKB" id="Q40577"/>
    </source>
</evidence>
<evidence type="ECO:0000250" key="3">
    <source>
        <dbReference type="UniProtKB" id="Q5GJ60"/>
    </source>
</evidence>
<evidence type="ECO:0000250" key="4">
    <source>
        <dbReference type="UniProtKB" id="Q6JD73"/>
    </source>
</evidence>
<evidence type="ECO:0000250" key="5">
    <source>
        <dbReference type="UniProtKB" id="Q6Q3H2"/>
    </source>
</evidence>
<evidence type="ECO:0000269" key="6">
    <source>
    </source>
</evidence>
<evidence type="ECO:0000303" key="7">
    <source>
    </source>
</evidence>
<evidence type="ECO:0000305" key="8"/>
<evidence type="ECO:0000305" key="9">
    <source>
    </source>
</evidence>
<evidence type="ECO:0000305" key="10">
    <source>
    </source>
</evidence>
<accession>Q6JD69</accession>
<reference key="1">
    <citation type="journal article" date="2004" name="Plant Cell">
        <title>The variability of sesquiterpenes emitted from two Zea mays cultivars is controlled by allelic variation of two terpene synthase genes encoding stereoselective multiple product enzymes.</title>
        <authorList>
            <person name="Koellner T.G."/>
            <person name="Schnee C."/>
            <person name="Gershenzon J."/>
            <person name="Degenhardt J."/>
        </authorList>
    </citation>
    <scope>NUCLEOTIDE SEQUENCE [MRNA]</scope>
    <scope>FUNCTION</scope>
    <source>
        <strain>cv. Delprim</strain>
    </source>
</reference>
<reference key="2">
    <citation type="journal article" date="2019" name="Planta">
        <title>Biosynthesis and function of terpenoid defense compounds in maize (Zea mays).</title>
        <authorList>
            <person name="Block A.K."/>
            <person name="Vaughan M.M."/>
            <person name="Schmelz E.A."/>
            <person name="Christensen S.A."/>
        </authorList>
    </citation>
    <scope>REVIEW</scope>
</reference>
<sequence>MASPPAHRSSKAADEELPKASSTFHPSLWGSFFLTYQPPTAPQRANMKERAEVLRERVRKVLKGSTTDQLPETVNLILTLQRLGLGYYYENEIDKLLHQIYSNSDYNVKDLNLVSQRFYLLRKNGYDVPSDVFLSFKTEEGGFACAAADTRSLLSLYNAAYLWKHGEEVLDEAISSTRLRLQDLLGRLLPESPFAKEVSSSLRTPLFRRVGILEARNYIPIYETEATRNEAVLELAKLNFNLQQLDFCEELKHCSAWWNEMIAKSKLTFVRDRIVEEYFWMNGACYDPPYSLSRIILTKITGLITIIDDMFDTHGTTEDCMKFAEAFGRWDESAIHLLPEYMKDFYILMLETFQSFEDALGPEKSYRVLYLKQAMERLVELYTKEIKWRDEDYVATMSEHLQVSAESIGANALTCSAYAGMGDMSITKETFEWALSFPQFIRTFGSFVRLSNDVVSTKREQTKDHSPSTVHCYMKEHGITMDDACEKIKELIEDSWKDMLEQSLALKGLPKVVPQLVFDFSRTTDNMYRDRDALTSSEALKEMIQLLFVEPIPE</sequence>
<feature type="chain" id="PRO_0000418852" description="Inactive sesquithujene synthase B">
    <location>
        <begin position="1"/>
        <end position="554"/>
    </location>
</feature>
<feature type="short sequence motif" description="DDXXD motif" evidence="1">
    <location>
        <begin position="308"/>
        <end position="312"/>
    </location>
</feature>
<feature type="binding site" evidence="2">
    <location>
        <position position="308"/>
    </location>
    <ligand>
        <name>Mg(2+)</name>
        <dbReference type="ChEBI" id="CHEBI:18420"/>
        <label>1</label>
    </ligand>
</feature>
<feature type="binding site" evidence="2">
    <location>
        <position position="308"/>
    </location>
    <ligand>
        <name>Mg(2+)</name>
        <dbReference type="ChEBI" id="CHEBI:18420"/>
        <label>2</label>
    </ligand>
</feature>
<feature type="binding site" evidence="1">
    <location>
        <position position="308"/>
    </location>
    <ligand>
        <name>substrate</name>
    </ligand>
</feature>
<feature type="binding site" evidence="2">
    <location>
        <position position="312"/>
    </location>
    <ligand>
        <name>Mg(2+)</name>
        <dbReference type="ChEBI" id="CHEBI:18420"/>
        <label>1</label>
    </ligand>
</feature>
<feature type="binding site" evidence="2">
    <location>
        <position position="312"/>
    </location>
    <ligand>
        <name>Mg(2+)</name>
        <dbReference type="ChEBI" id="CHEBI:18420"/>
        <label>2</label>
    </ligand>
</feature>
<feature type="binding site" evidence="1">
    <location>
        <position position="312"/>
    </location>
    <ligand>
        <name>substrate</name>
    </ligand>
</feature>
<feature type="binding site" evidence="1">
    <location>
        <position position="449"/>
    </location>
    <ligand>
        <name>substrate</name>
    </ligand>
</feature>
<feature type="binding site" evidence="2">
    <location>
        <position position="452"/>
    </location>
    <ligand>
        <name>Mg(2+)</name>
        <dbReference type="ChEBI" id="CHEBI:18420"/>
        <label>3</label>
    </ligand>
</feature>
<feature type="binding site" evidence="1">
    <location>
        <position position="452"/>
    </location>
    <ligand>
        <name>substrate</name>
    </ligand>
</feature>
<feature type="binding site" evidence="2">
    <location>
        <position position="456"/>
    </location>
    <ligand>
        <name>Mg(2+)</name>
        <dbReference type="ChEBI" id="CHEBI:18420"/>
        <label>3</label>
    </ligand>
</feature>
<feature type="binding site" evidence="2">
    <location>
        <position position="460"/>
    </location>
    <ligand>
        <name>Mg(2+)</name>
        <dbReference type="ChEBI" id="CHEBI:18420"/>
        <label>3</label>
    </ligand>
</feature>
<protein>
    <recommendedName>
        <fullName evidence="7">Inactive sesquithujene synthase B</fullName>
    </recommendedName>
    <alternativeName>
        <fullName evidence="7">Terpene synthase 5</fullName>
        <shortName evidence="7">tps5-Del2</shortName>
    </alternativeName>
</protein>
<gene>
    <name evidence="7" type="primary">TPS5B</name>
</gene>
<name>TPS5B_MAIZE</name>
<keyword id="KW-0963">Cytoplasm</keyword>
<keyword id="KW-0460">Magnesium</keyword>
<keyword id="KW-0464">Manganese</keyword>
<keyword id="KW-0479">Metal-binding</keyword>
<keyword id="KW-1185">Reference proteome</keyword>
<dbReference type="EMBL" id="AY518314">
    <property type="protein sequence ID" value="AAS88575.1"/>
    <property type="molecule type" value="mRNA"/>
</dbReference>
<dbReference type="SMR" id="Q6JD69"/>
<dbReference type="STRING" id="4577.Q6JD69"/>
<dbReference type="MaizeGDB" id="1219892"/>
<dbReference type="InParanoid" id="Q6JD69"/>
<dbReference type="UniPathway" id="UPA00213"/>
<dbReference type="Proteomes" id="UP000007305">
    <property type="component" value="Unplaced"/>
</dbReference>
<dbReference type="ExpressionAtlas" id="Q6JD69">
    <property type="expression patterns" value="baseline and differential"/>
</dbReference>
<dbReference type="GO" id="GO:0005737">
    <property type="term" value="C:cytoplasm"/>
    <property type="evidence" value="ECO:0007669"/>
    <property type="project" value="UniProtKB-SubCell"/>
</dbReference>
<dbReference type="GO" id="GO:0000287">
    <property type="term" value="F:magnesium ion binding"/>
    <property type="evidence" value="ECO:0007669"/>
    <property type="project" value="InterPro"/>
</dbReference>
<dbReference type="GO" id="GO:0010333">
    <property type="term" value="F:terpene synthase activity"/>
    <property type="evidence" value="ECO:0007669"/>
    <property type="project" value="InterPro"/>
</dbReference>
<dbReference type="GO" id="GO:0016102">
    <property type="term" value="P:diterpenoid biosynthetic process"/>
    <property type="evidence" value="ECO:0007669"/>
    <property type="project" value="InterPro"/>
</dbReference>
<dbReference type="CDD" id="cd00684">
    <property type="entry name" value="Terpene_cyclase_plant_C1"/>
    <property type="match status" value="1"/>
</dbReference>
<dbReference type="FunFam" id="1.10.600.10:FF:000007">
    <property type="entry name" value="Isoprene synthase, chloroplastic"/>
    <property type="match status" value="1"/>
</dbReference>
<dbReference type="Gene3D" id="1.10.600.10">
    <property type="entry name" value="Farnesyl Diphosphate Synthase"/>
    <property type="match status" value="1"/>
</dbReference>
<dbReference type="Gene3D" id="1.50.10.130">
    <property type="entry name" value="Terpene synthase, N-terminal domain"/>
    <property type="match status" value="1"/>
</dbReference>
<dbReference type="InterPro" id="IPR008949">
    <property type="entry name" value="Isoprenoid_synthase_dom_sf"/>
</dbReference>
<dbReference type="InterPro" id="IPR034741">
    <property type="entry name" value="Terpene_cyclase-like_1_C"/>
</dbReference>
<dbReference type="InterPro" id="IPR044814">
    <property type="entry name" value="Terpene_cyclase_plant_C1"/>
</dbReference>
<dbReference type="InterPro" id="IPR001906">
    <property type="entry name" value="Terpene_synth_N"/>
</dbReference>
<dbReference type="InterPro" id="IPR036965">
    <property type="entry name" value="Terpene_synth_N_sf"/>
</dbReference>
<dbReference type="InterPro" id="IPR050148">
    <property type="entry name" value="Terpene_synthase-like"/>
</dbReference>
<dbReference type="InterPro" id="IPR005630">
    <property type="entry name" value="Terpene_synthase_metal-bd"/>
</dbReference>
<dbReference type="InterPro" id="IPR008930">
    <property type="entry name" value="Terpenoid_cyclase/PrenylTrfase"/>
</dbReference>
<dbReference type="PANTHER" id="PTHR31225:SF168">
    <property type="entry name" value="INACTIVE SESQUITHUJENE SYNTHASE"/>
    <property type="match status" value="1"/>
</dbReference>
<dbReference type="PANTHER" id="PTHR31225">
    <property type="entry name" value="OS04G0344100 PROTEIN-RELATED"/>
    <property type="match status" value="1"/>
</dbReference>
<dbReference type="Pfam" id="PF01397">
    <property type="entry name" value="Terpene_synth"/>
    <property type="match status" value="1"/>
</dbReference>
<dbReference type="Pfam" id="PF03936">
    <property type="entry name" value="Terpene_synth_C"/>
    <property type="match status" value="1"/>
</dbReference>
<dbReference type="SFLD" id="SFLDS00005">
    <property type="entry name" value="Isoprenoid_Synthase_Type_I"/>
    <property type="match status" value="1"/>
</dbReference>
<dbReference type="SFLD" id="SFLDG01019">
    <property type="entry name" value="Terpene_Cyclase_Like_1_C_Termi"/>
    <property type="match status" value="1"/>
</dbReference>
<dbReference type="SUPFAM" id="SSF48239">
    <property type="entry name" value="Terpenoid cyclases/Protein prenyltransferases"/>
    <property type="match status" value="1"/>
</dbReference>
<dbReference type="SUPFAM" id="SSF48576">
    <property type="entry name" value="Terpenoid synthases"/>
    <property type="match status" value="1"/>
</dbReference>
<proteinExistence type="evidence at transcript level"/>